<proteinExistence type="inferred from homology"/>
<gene>
    <name evidence="1" type="primary">rpsG</name>
    <name type="ordered locus">VSAL_I0311</name>
</gene>
<name>RS7_ALISL</name>
<dbReference type="EMBL" id="FM178379">
    <property type="protein sequence ID" value="CAQ77996.1"/>
    <property type="molecule type" value="Genomic_DNA"/>
</dbReference>
<dbReference type="RefSeq" id="WP_012549146.1">
    <property type="nucleotide sequence ID" value="NC_011312.1"/>
</dbReference>
<dbReference type="SMR" id="B6EPR6"/>
<dbReference type="KEGG" id="vsa:VSAL_I0311"/>
<dbReference type="eggNOG" id="COG0049">
    <property type="taxonomic scope" value="Bacteria"/>
</dbReference>
<dbReference type="HOGENOM" id="CLU_072226_1_1_6"/>
<dbReference type="Proteomes" id="UP000001730">
    <property type="component" value="Chromosome 1"/>
</dbReference>
<dbReference type="GO" id="GO:0015935">
    <property type="term" value="C:small ribosomal subunit"/>
    <property type="evidence" value="ECO:0007669"/>
    <property type="project" value="InterPro"/>
</dbReference>
<dbReference type="GO" id="GO:0019843">
    <property type="term" value="F:rRNA binding"/>
    <property type="evidence" value="ECO:0007669"/>
    <property type="project" value="UniProtKB-UniRule"/>
</dbReference>
<dbReference type="GO" id="GO:0003735">
    <property type="term" value="F:structural constituent of ribosome"/>
    <property type="evidence" value="ECO:0007669"/>
    <property type="project" value="InterPro"/>
</dbReference>
<dbReference type="GO" id="GO:0000049">
    <property type="term" value="F:tRNA binding"/>
    <property type="evidence" value="ECO:0007669"/>
    <property type="project" value="UniProtKB-UniRule"/>
</dbReference>
<dbReference type="GO" id="GO:0006412">
    <property type="term" value="P:translation"/>
    <property type="evidence" value="ECO:0007669"/>
    <property type="project" value="UniProtKB-UniRule"/>
</dbReference>
<dbReference type="CDD" id="cd14869">
    <property type="entry name" value="uS7_Bacteria"/>
    <property type="match status" value="1"/>
</dbReference>
<dbReference type="FunFam" id="1.10.455.10:FF:000001">
    <property type="entry name" value="30S ribosomal protein S7"/>
    <property type="match status" value="1"/>
</dbReference>
<dbReference type="Gene3D" id="1.10.455.10">
    <property type="entry name" value="Ribosomal protein S7 domain"/>
    <property type="match status" value="1"/>
</dbReference>
<dbReference type="HAMAP" id="MF_00480_B">
    <property type="entry name" value="Ribosomal_uS7_B"/>
    <property type="match status" value="1"/>
</dbReference>
<dbReference type="InterPro" id="IPR000235">
    <property type="entry name" value="Ribosomal_uS7"/>
</dbReference>
<dbReference type="InterPro" id="IPR005717">
    <property type="entry name" value="Ribosomal_uS7_bac/org-type"/>
</dbReference>
<dbReference type="InterPro" id="IPR020606">
    <property type="entry name" value="Ribosomal_uS7_CS"/>
</dbReference>
<dbReference type="InterPro" id="IPR023798">
    <property type="entry name" value="Ribosomal_uS7_dom"/>
</dbReference>
<dbReference type="InterPro" id="IPR036823">
    <property type="entry name" value="Ribosomal_uS7_dom_sf"/>
</dbReference>
<dbReference type="NCBIfam" id="TIGR01029">
    <property type="entry name" value="rpsG_bact"/>
    <property type="match status" value="1"/>
</dbReference>
<dbReference type="PANTHER" id="PTHR11205">
    <property type="entry name" value="RIBOSOMAL PROTEIN S7"/>
    <property type="match status" value="1"/>
</dbReference>
<dbReference type="Pfam" id="PF00177">
    <property type="entry name" value="Ribosomal_S7"/>
    <property type="match status" value="1"/>
</dbReference>
<dbReference type="PIRSF" id="PIRSF002122">
    <property type="entry name" value="RPS7p_RPS7a_RPS5e_RPS7o"/>
    <property type="match status" value="1"/>
</dbReference>
<dbReference type="SUPFAM" id="SSF47973">
    <property type="entry name" value="Ribosomal protein S7"/>
    <property type="match status" value="1"/>
</dbReference>
<dbReference type="PROSITE" id="PS00052">
    <property type="entry name" value="RIBOSOMAL_S7"/>
    <property type="match status" value="1"/>
</dbReference>
<evidence type="ECO:0000255" key="1">
    <source>
        <dbReference type="HAMAP-Rule" id="MF_00480"/>
    </source>
</evidence>
<evidence type="ECO:0000305" key="2"/>
<sequence length="156" mass="17803">MPRRRVIGQRKILPDPKFKSELLAKFVNIVMVDGKKSTAEKIVYGALELMAEKSGKDHLAVFEEALENIRPSVEVKSRRVGGSTYQVPVEVRPVRRNALAMRWLVEAARKRGEKSMAQRLANEMLDASENKGTSVKKREDVHRMADANKAFAHYRW</sequence>
<reference key="1">
    <citation type="journal article" date="2008" name="BMC Genomics">
        <title>The genome sequence of the fish pathogen Aliivibrio salmonicida strain LFI1238 shows extensive evidence of gene decay.</title>
        <authorList>
            <person name="Hjerde E."/>
            <person name="Lorentzen M.S."/>
            <person name="Holden M.T."/>
            <person name="Seeger K."/>
            <person name="Paulsen S."/>
            <person name="Bason N."/>
            <person name="Churcher C."/>
            <person name="Harris D."/>
            <person name="Norbertczak H."/>
            <person name="Quail M.A."/>
            <person name="Sanders S."/>
            <person name="Thurston S."/>
            <person name="Parkhill J."/>
            <person name="Willassen N.P."/>
            <person name="Thomson N.R."/>
        </authorList>
    </citation>
    <scope>NUCLEOTIDE SEQUENCE [LARGE SCALE GENOMIC DNA]</scope>
    <source>
        <strain>LFI1238</strain>
    </source>
</reference>
<keyword id="KW-0687">Ribonucleoprotein</keyword>
<keyword id="KW-0689">Ribosomal protein</keyword>
<keyword id="KW-0694">RNA-binding</keyword>
<keyword id="KW-0699">rRNA-binding</keyword>
<keyword id="KW-0820">tRNA-binding</keyword>
<feature type="chain" id="PRO_1000125886" description="Small ribosomal subunit protein uS7">
    <location>
        <begin position="1"/>
        <end position="156"/>
    </location>
</feature>
<protein>
    <recommendedName>
        <fullName evidence="1">Small ribosomal subunit protein uS7</fullName>
    </recommendedName>
    <alternativeName>
        <fullName evidence="2">30S ribosomal protein S7</fullName>
    </alternativeName>
</protein>
<accession>B6EPR6</accession>
<organism>
    <name type="scientific">Aliivibrio salmonicida (strain LFI1238)</name>
    <name type="common">Vibrio salmonicida (strain LFI1238)</name>
    <dbReference type="NCBI Taxonomy" id="316275"/>
    <lineage>
        <taxon>Bacteria</taxon>
        <taxon>Pseudomonadati</taxon>
        <taxon>Pseudomonadota</taxon>
        <taxon>Gammaproteobacteria</taxon>
        <taxon>Vibrionales</taxon>
        <taxon>Vibrionaceae</taxon>
        <taxon>Aliivibrio</taxon>
    </lineage>
</organism>
<comment type="function">
    <text evidence="1">One of the primary rRNA binding proteins, it binds directly to 16S rRNA where it nucleates assembly of the head domain of the 30S subunit. Is located at the subunit interface close to the decoding center, probably blocks exit of the E-site tRNA.</text>
</comment>
<comment type="subunit">
    <text evidence="1">Part of the 30S ribosomal subunit. Contacts proteins S9 and S11.</text>
</comment>
<comment type="similarity">
    <text evidence="1">Belongs to the universal ribosomal protein uS7 family.</text>
</comment>